<gene>
    <name type="primary">yubL</name>
    <name type="ordered locus">YPMT1.60c</name>
    <name type="ordered locus">Y1091</name>
    <name type="ordered locus">YP_pMT098</name>
    <name type="ORF">ORF131</name>
</gene>
<proteinExistence type="inferred from homology"/>
<feature type="chain" id="PRO_0000268755" description="UPF0401 protein YubL">
    <location>
        <begin position="1"/>
        <end position="76"/>
    </location>
</feature>
<organism>
    <name type="scientific">Yersinia pestis</name>
    <dbReference type="NCBI Taxonomy" id="632"/>
    <lineage>
        <taxon>Bacteria</taxon>
        <taxon>Pseudomonadati</taxon>
        <taxon>Pseudomonadota</taxon>
        <taxon>Gammaproteobacteria</taxon>
        <taxon>Enterobacterales</taxon>
        <taxon>Yersiniaceae</taxon>
        <taxon>Yersinia</taxon>
    </lineage>
</organism>
<geneLocation type="plasmid">
    <name>pMT1</name>
    <name>pMT-1</name>
</geneLocation>
<geneLocation type="plasmid">
    <name>pG8786</name>
</geneLocation>
<protein>
    <recommendedName>
        <fullName>UPF0401 protein YubL</fullName>
    </recommendedName>
</protein>
<evidence type="ECO:0000305" key="1"/>
<comment type="similarity">
    <text evidence="1">Belongs to the UPF0401 family.</text>
</comment>
<name>YUBL_YERPE</name>
<dbReference type="EMBL" id="AF074611">
    <property type="protein sequence ID" value="AAC82749.1"/>
    <property type="molecule type" value="Genomic_DNA"/>
</dbReference>
<dbReference type="EMBL" id="AF053947">
    <property type="protein sequence ID" value="AAC13243.1"/>
    <property type="molecule type" value="Genomic_DNA"/>
</dbReference>
<dbReference type="EMBL" id="AJ698720">
    <property type="protein sequence ID" value="CAG27550.1"/>
    <property type="molecule type" value="Genomic_DNA"/>
</dbReference>
<dbReference type="EMBL" id="AL117211">
    <property type="protein sequence ID" value="CAB55242.1"/>
    <property type="molecule type" value="Genomic_DNA"/>
</dbReference>
<dbReference type="EMBL" id="AE017045">
    <property type="protein sequence ID" value="AAS58729.1"/>
    <property type="molecule type" value="Genomic_DNA"/>
</dbReference>
<dbReference type="PIR" id="T14724">
    <property type="entry name" value="T14724"/>
</dbReference>
<dbReference type="RefSeq" id="NP_395404.1">
    <property type="nucleotide sequence ID" value="NC_003134.1"/>
</dbReference>
<dbReference type="RefSeq" id="NP_857714.1">
    <property type="nucleotide sequence ID" value="NC_004835.1"/>
</dbReference>
<dbReference type="RefSeq" id="WP_002211745.1">
    <property type="nucleotide sequence ID" value="NZ_WUCM01000089.1"/>
</dbReference>
<dbReference type="RefSeq" id="YP_094023.1">
    <property type="nucleotide sequence ID" value="NC_006323.1"/>
</dbReference>
<dbReference type="SMR" id="Q7ARC3"/>
<dbReference type="EnsemblBacteria" id="AAS58729">
    <property type="protein sequence ID" value="AAS58729"/>
    <property type="gene ID" value="YP_pMT098"/>
</dbReference>
<dbReference type="KEGG" id="ype:YPMT1.60c"/>
<dbReference type="KEGG" id="ypk:Y1091.pl"/>
<dbReference type="KEGG" id="ypm:YP_pMT098"/>
<dbReference type="PATRIC" id="fig|214092.21.peg.187"/>
<dbReference type="HOGENOM" id="CLU_182912_1_0_6"/>
<dbReference type="OMA" id="RMSEYFR"/>
<dbReference type="Proteomes" id="UP000000815">
    <property type="component" value="Plasmid pMT1"/>
</dbReference>
<dbReference type="Proteomes" id="UP000001019">
    <property type="component" value="Plasmid pMT1"/>
</dbReference>
<dbReference type="Proteomes" id="UP000002490">
    <property type="component" value="Plasmid pMT-1"/>
</dbReference>
<dbReference type="Gene3D" id="3.30.160.130">
    <property type="entry name" value="ykff protein like domains"/>
    <property type="match status" value="1"/>
</dbReference>
<dbReference type="InterPro" id="IPR009253">
    <property type="entry name" value="DUF905"/>
</dbReference>
<dbReference type="InterPro" id="IPR038612">
    <property type="entry name" value="YkfF-like_sf"/>
</dbReference>
<dbReference type="Pfam" id="PF06006">
    <property type="entry name" value="DUF905"/>
    <property type="match status" value="1"/>
</dbReference>
<dbReference type="SUPFAM" id="SSF54786">
    <property type="entry name" value="YcfA/nrd intein domain"/>
    <property type="match status" value="1"/>
</dbReference>
<sequence>MSEALAVLPDDTFTREQAEVVAAQYTNVAIEDDQGAHFRLVVRQNGEMVWRTWNFEPGGTYWLNRYIADYGIRKPQ</sequence>
<keyword id="KW-0614">Plasmid</keyword>
<keyword id="KW-1185">Reference proteome</keyword>
<reference key="1">
    <citation type="journal article" date="1998" name="J. Bacteriol.">
        <title>Structural organization of virulence-associated plasmids of Yersinia pestis.</title>
        <authorList>
            <person name="Hu P."/>
            <person name="Elliott J."/>
            <person name="McCready P."/>
            <person name="Skowronski E."/>
            <person name="Garnes J."/>
            <person name="Kobayashi A."/>
            <person name="Brubaker R.R."/>
            <person name="Garcia E."/>
        </authorList>
    </citation>
    <scope>NUCLEOTIDE SEQUENCE [GENOMIC DNA]</scope>
    <source>
        <strain>KIM5 / Biovar Mediaevalis</strain>
        <plasmid>pMT1 (pMT-1)</plasmid>
    </source>
</reference>
<reference key="2">
    <citation type="journal article" date="2004" name="Infect. Immun.">
        <title>Structural organization of the pFra virulence-associated plasmid of rhamnose-positive Yersinia pestis.</title>
        <authorList>
            <person name="Golubov A."/>
            <person name="Neubauer H."/>
            <person name="Noelting C."/>
            <person name="Heesemann J."/>
            <person name="Rakin A."/>
        </authorList>
    </citation>
    <scope>NUCLEOTIDE SEQUENCE [GENOMIC DNA]</scope>
    <source>
        <strain>G8786</strain>
        <plasmid>pG8786</plasmid>
    </source>
</reference>
<reference key="3">
    <citation type="journal article" date="2004" name="J. Bacteriol.">
        <title>Genetics of metabolic variations between Yersinia pestis biovars and the proposal of a new biovar, microtus.</title>
        <authorList>
            <person name="Zhou D."/>
            <person name="Tong Z."/>
            <person name="Song Y."/>
            <person name="Han Y."/>
            <person name="Pei D."/>
            <person name="Pang X."/>
            <person name="Zhai J."/>
            <person name="Li M."/>
            <person name="Cui B."/>
            <person name="Qi Z."/>
            <person name="Jin L."/>
            <person name="Dai R."/>
            <person name="Du Z."/>
            <person name="Wang J."/>
            <person name="Guo Z."/>
            <person name="Wang J."/>
            <person name="Huang P."/>
            <person name="Yang R."/>
        </authorList>
    </citation>
    <scope>NUCLEOTIDE SEQUENCE [GENOMIC DNA]</scope>
    <source>
        <strain>91001 / Biovar Mediaevalis</strain>
        <plasmid>pMT1 (pMT-1)</plasmid>
    </source>
</reference>
<reference key="4">
    <citation type="journal article" date="1998" name="Infect. Immun.">
        <title>Complete DNA sequence and detailed analysis of the Yersinia pestis KIM5 plasmid encoding murine toxin and capsular antigen.</title>
        <authorList>
            <person name="Lindler L.E."/>
            <person name="Plano G.V."/>
            <person name="Burland V."/>
            <person name="Mayhew G.F."/>
            <person name="Blattner F.R."/>
        </authorList>
    </citation>
    <scope>NUCLEOTIDE SEQUENCE [LARGE SCALE GENOMIC DNA]</scope>
    <source>
        <strain>KIM10+ / Biovar Mediaevalis</strain>
        <plasmid>pMT1 (pMT-1)</plasmid>
    </source>
</reference>
<reference key="5">
    <citation type="journal article" date="2001" name="Nature">
        <title>Genome sequence of Yersinia pestis, the causative agent of plague.</title>
        <authorList>
            <person name="Parkhill J."/>
            <person name="Wren B.W."/>
            <person name="Thomson N.R."/>
            <person name="Titball R.W."/>
            <person name="Holden M.T.G."/>
            <person name="Prentice M.B."/>
            <person name="Sebaihia M."/>
            <person name="James K.D."/>
            <person name="Churcher C.M."/>
            <person name="Mungall K.L."/>
            <person name="Baker S."/>
            <person name="Basham D."/>
            <person name="Bentley S.D."/>
            <person name="Brooks K."/>
            <person name="Cerdeno-Tarraga A.-M."/>
            <person name="Chillingworth T."/>
            <person name="Cronin A."/>
            <person name="Davies R.M."/>
            <person name="Davis P."/>
            <person name="Dougan G."/>
            <person name="Feltwell T."/>
            <person name="Hamlin N."/>
            <person name="Holroyd S."/>
            <person name="Jagels K."/>
            <person name="Karlyshev A.V."/>
            <person name="Leather S."/>
            <person name="Moule S."/>
            <person name="Oyston P.C.F."/>
            <person name="Quail M.A."/>
            <person name="Rutherford K.M."/>
            <person name="Simmonds M."/>
            <person name="Skelton J."/>
            <person name="Stevens K."/>
            <person name="Whitehead S."/>
            <person name="Barrell B.G."/>
        </authorList>
    </citation>
    <scope>NUCLEOTIDE SEQUENCE [LARGE SCALE GENOMIC DNA]</scope>
    <source>
        <strain>CO-92 / Biovar Orientalis</strain>
        <plasmid>pMT1 (pMT-1)</plasmid>
    </source>
</reference>
<reference key="6">
    <citation type="journal article" date="2004" name="DNA Res.">
        <title>Complete genome sequence of Yersinia pestis strain 91001, an isolate avirulent to humans.</title>
        <authorList>
            <person name="Song Y."/>
            <person name="Tong Z."/>
            <person name="Wang J."/>
            <person name="Wang L."/>
            <person name="Guo Z."/>
            <person name="Han Y."/>
            <person name="Zhang J."/>
            <person name="Pei D."/>
            <person name="Zhou D."/>
            <person name="Qin H."/>
            <person name="Pang X."/>
            <person name="Han Y."/>
            <person name="Zhai J."/>
            <person name="Li M."/>
            <person name="Cui B."/>
            <person name="Qi Z."/>
            <person name="Jin L."/>
            <person name="Dai R."/>
            <person name="Chen F."/>
            <person name="Li S."/>
            <person name="Ye C."/>
            <person name="Du Z."/>
            <person name="Lin W."/>
            <person name="Wang J."/>
            <person name="Yu J."/>
            <person name="Yang H."/>
            <person name="Wang J."/>
            <person name="Huang P."/>
            <person name="Yang R."/>
        </authorList>
    </citation>
    <scope>NUCLEOTIDE SEQUENCE [LARGE SCALE GENOMIC DNA]</scope>
    <source>
        <strain>91001 / Biovar Mediaevalis</strain>
        <plasmid>pMT1 (pMT-1)</plasmid>
    </source>
</reference>
<accession>Q7ARC3</accession>
<accession>O68793</accession>
<accession>Q74YI0</accession>